<comment type="function">
    <text evidence="1">Component of the Mediator complex, a coactivator involved in the regulated transcription of nearly all RNA polymerase II-dependent genes. Mediator functions as a bridge to convey information from gene-specific regulatory proteins to the basal RNA polymerase II transcription machinery. Mediator is recruited to promoters by direct interactions with regulatory proteins and serves as a scaffold for the assembly of a functional pre-initiation complex with RNA polymerase II and the general transcription factors (By similarity).</text>
</comment>
<comment type="subunit">
    <text evidence="2 5">Component of the Mediator complex, which is composed of MED1, MED4, MED6, MED7, MED8, MED9, MED10, MED11, MED12, MED13, MED13L, MED14, MED15, MED16, MED17, MED18, MED19, MED20, MED21, MED22, MED23, MED24, MED25, MED26, MED27, MED29, MED30, MED31, CCNC, CDK8 and CDC2L6/CDK11. The MED12, MED13, CCNC and CDK8 subunits form a distinct module termed the CDK8 module. Mediator containing the CDK8 module is less active than Mediator lacking this module in supporting transcriptional activation. Individual preparations of the Mediator complex lacking one or more distinct subunits have been variously termed ARC, CRSP, DRIP, PC2, SMCC and TRAP (By similarity). Interacts with CEBPB (when not methylated) (PubMed:20111005).</text>
</comment>
<comment type="subcellular location">
    <subcellularLocation>
        <location evidence="6">Nucleus</location>
    </subcellularLocation>
</comment>
<comment type="similarity">
    <text evidence="6">Belongs to the Mediator complex subunit 26 family.</text>
</comment>
<organism>
    <name type="scientific">Mus musculus</name>
    <name type="common">Mouse</name>
    <dbReference type="NCBI Taxonomy" id="10090"/>
    <lineage>
        <taxon>Eukaryota</taxon>
        <taxon>Metazoa</taxon>
        <taxon>Chordata</taxon>
        <taxon>Craniata</taxon>
        <taxon>Vertebrata</taxon>
        <taxon>Euteleostomi</taxon>
        <taxon>Mammalia</taxon>
        <taxon>Eutheria</taxon>
        <taxon>Euarchontoglires</taxon>
        <taxon>Glires</taxon>
        <taxon>Rodentia</taxon>
        <taxon>Myomorpha</taxon>
        <taxon>Muroidea</taxon>
        <taxon>Muridae</taxon>
        <taxon>Murinae</taxon>
        <taxon>Mus</taxon>
        <taxon>Mus</taxon>
    </lineage>
</organism>
<sequence length="588" mass="64680">MTAAPASPQQMRDRLLQAIDSQSNIRNMVAVLEVISSLERYPITKEALEETRLGKLINDVRKKTKNEELAKRAKRLLRSWQKLIEPVHQNEVALRALAGAAGSANGGAHNCRPEMGVAGAPKSIHDLKNRNDIQRLPGQRLDRLGSRKRRGDQRDLGHPGPPHKVSKGSPDPLVPNASPLPTNGISGSPESLPSPLDGSGHLGPDGSRLEPSDNEKHSTKIPVNAVRPRPSSPGLGKPPVPCLQTKAAQLQQLDRADESPGPPYPRGSSRCSFSPRNSRHEGSFSRHRSSYIPKGQVSSPSPWPQPPDNTQVPSPLPLAQPPTPPVRRQELLPNAESPVHWPEQSEGHPRLTGPACRAGFSPDSSKADSDATSSGGSDSKKKKRYRPRDYTVNLDGQVAEAGVKPVRLKERKLTFDPMTRQIRPLTQKEPVRADSPVPTEQLPRTELEQQEVKASLQSPFEQTNWKELSRNEIIQSYLSRQSSLLSSSGAQTPGAHHFMAEYLKQEESSRQGARQPHVLLPLPTPTDLPGLTREVTQDDLDRIQAQQWPGVNGCEDTQGNWYDWTQCISLDPHGDDGRLNILPYVCLD</sequence>
<feature type="chain" id="PRO_0000304959" description="Mediator of RNA polymerase II transcription subunit 26">
    <location>
        <begin position="1"/>
        <end position="588"/>
    </location>
</feature>
<feature type="domain" description="TFIIS N-terminal" evidence="3">
    <location>
        <begin position="10"/>
        <end position="87"/>
    </location>
</feature>
<feature type="region of interest" description="Disordered" evidence="4">
    <location>
        <begin position="112"/>
        <end position="393"/>
    </location>
</feature>
<feature type="region of interest" description="Disordered" evidence="4">
    <location>
        <begin position="412"/>
        <end position="441"/>
    </location>
</feature>
<feature type="compositionally biased region" description="Basic and acidic residues" evidence="4">
    <location>
        <begin position="123"/>
        <end position="133"/>
    </location>
</feature>
<feature type="compositionally biased region" description="Polar residues" evidence="4">
    <location>
        <begin position="179"/>
        <end position="191"/>
    </location>
</feature>
<feature type="compositionally biased region" description="Basic and acidic residues" evidence="4">
    <location>
        <begin position="207"/>
        <end position="218"/>
    </location>
</feature>
<feature type="compositionally biased region" description="Pro residues" evidence="4">
    <location>
        <begin position="314"/>
        <end position="325"/>
    </location>
</feature>
<feature type="modified residue" description="Phosphoserine" evidence="7">
    <location>
        <position position="435"/>
    </location>
</feature>
<feature type="modified residue" description="Phosphoserine" evidence="2">
    <location>
        <position position="458"/>
    </location>
</feature>
<feature type="sequence conflict" description="In Ref. 1; BAC38738." evidence="6" ref="1">
    <original>T</original>
    <variation>N</variation>
    <location>
        <position position="64"/>
    </location>
</feature>
<feature type="sequence conflict" description="In Ref. 1; BAB30898." evidence="6" ref="1">
    <original>SDN</original>
    <variation>VII</variation>
    <location>
        <begin position="212"/>
        <end position="214"/>
    </location>
</feature>
<proteinExistence type="evidence at protein level"/>
<dbReference type="EMBL" id="AK017726">
    <property type="protein sequence ID" value="BAB30898.1"/>
    <property type="molecule type" value="mRNA"/>
</dbReference>
<dbReference type="EMBL" id="AK083035">
    <property type="protein sequence ID" value="BAC38738.1"/>
    <property type="molecule type" value="mRNA"/>
</dbReference>
<dbReference type="EMBL" id="BC024555">
    <property type="protein sequence ID" value="AAH24555.1"/>
    <property type="molecule type" value="mRNA"/>
</dbReference>
<dbReference type="EMBL" id="BC054737">
    <property type="protein sequence ID" value="AAH54737.1"/>
    <property type="molecule type" value="mRNA"/>
</dbReference>
<dbReference type="CCDS" id="CCDS22416.1"/>
<dbReference type="RefSeq" id="NP_081761.2">
    <property type="nucleotide sequence ID" value="NM_027485.4"/>
</dbReference>
<dbReference type="PDB" id="8T1I">
    <property type="method" value="EM"/>
    <property type="resolution" value="4.68 A"/>
    <property type="chains" value="U=1-588"/>
</dbReference>
<dbReference type="PDBsum" id="8T1I"/>
<dbReference type="EMDB" id="EMD-40968"/>
<dbReference type="SMR" id="Q7TN02"/>
<dbReference type="BioGRID" id="214175">
    <property type="interactions" value="5"/>
</dbReference>
<dbReference type="ComplexPortal" id="CPX-3264">
    <property type="entry name" value="Core mediator complex"/>
</dbReference>
<dbReference type="FunCoup" id="Q7TN02">
    <property type="interactions" value="3079"/>
</dbReference>
<dbReference type="IntAct" id="Q7TN02">
    <property type="interactions" value="6"/>
</dbReference>
<dbReference type="MINT" id="Q7TN02"/>
<dbReference type="STRING" id="10090.ENSMUSP00000058697"/>
<dbReference type="GlyGen" id="Q7TN02">
    <property type="glycosylation" value="2 sites"/>
</dbReference>
<dbReference type="iPTMnet" id="Q7TN02"/>
<dbReference type="PhosphoSitePlus" id="Q7TN02"/>
<dbReference type="jPOST" id="Q7TN02"/>
<dbReference type="PaxDb" id="10090-ENSMUSP00000058697"/>
<dbReference type="PeptideAtlas" id="Q7TN02"/>
<dbReference type="ProteomicsDB" id="293452"/>
<dbReference type="Pumba" id="Q7TN02"/>
<dbReference type="DNASU" id="70625"/>
<dbReference type="Ensembl" id="ENSMUST00000058534.7">
    <property type="protein sequence ID" value="ENSMUSP00000058697.6"/>
    <property type="gene ID" value="ENSMUSG00000045248.7"/>
</dbReference>
<dbReference type="GeneID" id="70625"/>
<dbReference type="KEGG" id="mmu:70625"/>
<dbReference type="UCSC" id="uc009mgg.2">
    <property type="organism name" value="mouse"/>
</dbReference>
<dbReference type="AGR" id="MGI:1917875"/>
<dbReference type="CTD" id="9441"/>
<dbReference type="MGI" id="MGI:1917875">
    <property type="gene designation" value="Med26"/>
</dbReference>
<dbReference type="VEuPathDB" id="HostDB:ENSMUSG00000045248"/>
<dbReference type="eggNOG" id="KOG1105">
    <property type="taxonomic scope" value="Eukaryota"/>
</dbReference>
<dbReference type="GeneTree" id="ENSGT00390000000259"/>
<dbReference type="HOGENOM" id="CLU_478915_0_0_1"/>
<dbReference type="InParanoid" id="Q7TN02"/>
<dbReference type="OMA" id="PDASRMD"/>
<dbReference type="OrthoDB" id="550309at2759"/>
<dbReference type="PhylomeDB" id="Q7TN02"/>
<dbReference type="TreeFam" id="TF328436"/>
<dbReference type="BioGRID-ORCS" id="70625">
    <property type="hits" value="35 hits in 79 CRISPR screens"/>
</dbReference>
<dbReference type="ChiTaRS" id="Med26">
    <property type="organism name" value="mouse"/>
</dbReference>
<dbReference type="PRO" id="PR:Q7TN02"/>
<dbReference type="Proteomes" id="UP000000589">
    <property type="component" value="Chromosome 8"/>
</dbReference>
<dbReference type="RNAct" id="Q7TN02">
    <property type="molecule type" value="protein"/>
</dbReference>
<dbReference type="Bgee" id="ENSMUSG00000045248">
    <property type="expression patterns" value="Expressed in seminiferous tubule of testis and 180 other cell types or tissues"/>
</dbReference>
<dbReference type="GO" id="GO:0070847">
    <property type="term" value="C:core mediator complex"/>
    <property type="evidence" value="ECO:0000266"/>
    <property type="project" value="ComplexPortal"/>
</dbReference>
<dbReference type="GO" id="GO:0016592">
    <property type="term" value="C:mediator complex"/>
    <property type="evidence" value="ECO:0000314"/>
    <property type="project" value="MGI"/>
</dbReference>
<dbReference type="GO" id="GO:0005654">
    <property type="term" value="C:nucleoplasm"/>
    <property type="evidence" value="ECO:0000304"/>
    <property type="project" value="Reactome"/>
</dbReference>
<dbReference type="GO" id="GO:0005634">
    <property type="term" value="C:nucleus"/>
    <property type="evidence" value="ECO:0000266"/>
    <property type="project" value="ComplexPortal"/>
</dbReference>
<dbReference type="GO" id="GO:0003712">
    <property type="term" value="F:transcription coregulator activity"/>
    <property type="evidence" value="ECO:0000250"/>
    <property type="project" value="UniProtKB"/>
</dbReference>
<dbReference type="GO" id="GO:0032968">
    <property type="term" value="P:positive regulation of transcription elongation by RNA polymerase II"/>
    <property type="evidence" value="ECO:0000303"/>
    <property type="project" value="ComplexPortal"/>
</dbReference>
<dbReference type="GO" id="GO:0060261">
    <property type="term" value="P:positive regulation of transcription initiation by RNA polymerase II"/>
    <property type="evidence" value="ECO:0000303"/>
    <property type="project" value="ComplexPortal"/>
</dbReference>
<dbReference type="GO" id="GO:0006357">
    <property type="term" value="P:regulation of transcription by RNA polymerase II"/>
    <property type="evidence" value="ECO:0000250"/>
    <property type="project" value="UniProtKB"/>
</dbReference>
<dbReference type="GO" id="GO:0051123">
    <property type="term" value="P:RNA polymerase II preinitiation complex assembly"/>
    <property type="evidence" value="ECO:0000303"/>
    <property type="project" value="ComplexPortal"/>
</dbReference>
<dbReference type="CDD" id="cd00183">
    <property type="entry name" value="TFIIS_I"/>
    <property type="match status" value="1"/>
</dbReference>
<dbReference type="FunFam" id="1.20.930.10:FF:000008">
    <property type="entry name" value="mediator of RNA polymerase II transcription subunit 26"/>
    <property type="match status" value="1"/>
</dbReference>
<dbReference type="Gene3D" id="1.20.930.10">
    <property type="entry name" value="Conserved domain common to transcription factors TFIIS, elongin A, CRSP70"/>
    <property type="match status" value="1"/>
</dbReference>
<dbReference type="InterPro" id="IPR042376">
    <property type="entry name" value="MED26"/>
</dbReference>
<dbReference type="InterPro" id="IPR031416">
    <property type="entry name" value="Med26_C"/>
</dbReference>
<dbReference type="InterPro" id="IPR031417">
    <property type="entry name" value="Med26_Mid"/>
</dbReference>
<dbReference type="InterPro" id="IPR003617">
    <property type="entry name" value="TFIIS/CRSP70_N_sub"/>
</dbReference>
<dbReference type="InterPro" id="IPR035441">
    <property type="entry name" value="TFIIS/LEDGF_dom_sf"/>
</dbReference>
<dbReference type="InterPro" id="IPR017923">
    <property type="entry name" value="TFIIS_N"/>
</dbReference>
<dbReference type="PANTHER" id="PTHR15201">
    <property type="entry name" value="CRSP70"/>
    <property type="match status" value="1"/>
</dbReference>
<dbReference type="PANTHER" id="PTHR15201:SF1">
    <property type="entry name" value="MEDIATOR OF RNA POLYMERASE II TRANSCRIPTION SUBUNIT 26"/>
    <property type="match status" value="1"/>
</dbReference>
<dbReference type="Pfam" id="PF08711">
    <property type="entry name" value="Med26"/>
    <property type="match status" value="1"/>
</dbReference>
<dbReference type="Pfam" id="PF15693">
    <property type="entry name" value="Med26_C"/>
    <property type="match status" value="1"/>
</dbReference>
<dbReference type="Pfam" id="PF15694">
    <property type="entry name" value="Med26_M"/>
    <property type="match status" value="1"/>
</dbReference>
<dbReference type="SMART" id="SM00509">
    <property type="entry name" value="TFS2N"/>
    <property type="match status" value="1"/>
</dbReference>
<dbReference type="SUPFAM" id="SSF47676">
    <property type="entry name" value="Conserved domain common to transcription factors TFIIS, elongin A, CRSP70"/>
    <property type="match status" value="1"/>
</dbReference>
<dbReference type="PROSITE" id="PS51319">
    <property type="entry name" value="TFIIS_N"/>
    <property type="match status" value="1"/>
</dbReference>
<gene>
    <name type="primary">Med26</name>
    <name type="synonym">Crsp7</name>
</gene>
<name>MED26_MOUSE</name>
<accession>Q7TN02</accession>
<accession>Q8BUP9</accession>
<accession>Q8R1G7</accession>
<accession>Q9CS67</accession>
<keyword id="KW-0002">3D-structure</keyword>
<keyword id="KW-0010">Activator</keyword>
<keyword id="KW-0539">Nucleus</keyword>
<keyword id="KW-0597">Phosphoprotein</keyword>
<keyword id="KW-1185">Reference proteome</keyword>
<keyword id="KW-0804">Transcription</keyword>
<keyword id="KW-0805">Transcription regulation</keyword>
<reference key="1">
    <citation type="journal article" date="2005" name="Science">
        <title>The transcriptional landscape of the mammalian genome.</title>
        <authorList>
            <person name="Carninci P."/>
            <person name="Kasukawa T."/>
            <person name="Katayama S."/>
            <person name="Gough J."/>
            <person name="Frith M.C."/>
            <person name="Maeda N."/>
            <person name="Oyama R."/>
            <person name="Ravasi T."/>
            <person name="Lenhard B."/>
            <person name="Wells C."/>
            <person name="Kodzius R."/>
            <person name="Shimokawa K."/>
            <person name="Bajic V.B."/>
            <person name="Brenner S.E."/>
            <person name="Batalov S."/>
            <person name="Forrest A.R."/>
            <person name="Zavolan M."/>
            <person name="Davis M.J."/>
            <person name="Wilming L.G."/>
            <person name="Aidinis V."/>
            <person name="Allen J.E."/>
            <person name="Ambesi-Impiombato A."/>
            <person name="Apweiler R."/>
            <person name="Aturaliya R.N."/>
            <person name="Bailey T.L."/>
            <person name="Bansal M."/>
            <person name="Baxter L."/>
            <person name="Beisel K.W."/>
            <person name="Bersano T."/>
            <person name="Bono H."/>
            <person name="Chalk A.M."/>
            <person name="Chiu K.P."/>
            <person name="Choudhary V."/>
            <person name="Christoffels A."/>
            <person name="Clutterbuck D.R."/>
            <person name="Crowe M.L."/>
            <person name="Dalla E."/>
            <person name="Dalrymple B.P."/>
            <person name="de Bono B."/>
            <person name="Della Gatta G."/>
            <person name="di Bernardo D."/>
            <person name="Down T."/>
            <person name="Engstrom P."/>
            <person name="Fagiolini M."/>
            <person name="Faulkner G."/>
            <person name="Fletcher C.F."/>
            <person name="Fukushima T."/>
            <person name="Furuno M."/>
            <person name="Futaki S."/>
            <person name="Gariboldi M."/>
            <person name="Georgii-Hemming P."/>
            <person name="Gingeras T.R."/>
            <person name="Gojobori T."/>
            <person name="Green R.E."/>
            <person name="Gustincich S."/>
            <person name="Harbers M."/>
            <person name="Hayashi Y."/>
            <person name="Hensch T.K."/>
            <person name="Hirokawa N."/>
            <person name="Hill D."/>
            <person name="Huminiecki L."/>
            <person name="Iacono M."/>
            <person name="Ikeo K."/>
            <person name="Iwama A."/>
            <person name="Ishikawa T."/>
            <person name="Jakt M."/>
            <person name="Kanapin A."/>
            <person name="Katoh M."/>
            <person name="Kawasawa Y."/>
            <person name="Kelso J."/>
            <person name="Kitamura H."/>
            <person name="Kitano H."/>
            <person name="Kollias G."/>
            <person name="Krishnan S.P."/>
            <person name="Kruger A."/>
            <person name="Kummerfeld S.K."/>
            <person name="Kurochkin I.V."/>
            <person name="Lareau L.F."/>
            <person name="Lazarevic D."/>
            <person name="Lipovich L."/>
            <person name="Liu J."/>
            <person name="Liuni S."/>
            <person name="McWilliam S."/>
            <person name="Madan Babu M."/>
            <person name="Madera M."/>
            <person name="Marchionni L."/>
            <person name="Matsuda H."/>
            <person name="Matsuzawa S."/>
            <person name="Miki H."/>
            <person name="Mignone F."/>
            <person name="Miyake S."/>
            <person name="Morris K."/>
            <person name="Mottagui-Tabar S."/>
            <person name="Mulder N."/>
            <person name="Nakano N."/>
            <person name="Nakauchi H."/>
            <person name="Ng P."/>
            <person name="Nilsson R."/>
            <person name="Nishiguchi S."/>
            <person name="Nishikawa S."/>
            <person name="Nori F."/>
            <person name="Ohara O."/>
            <person name="Okazaki Y."/>
            <person name="Orlando V."/>
            <person name="Pang K.C."/>
            <person name="Pavan W.J."/>
            <person name="Pavesi G."/>
            <person name="Pesole G."/>
            <person name="Petrovsky N."/>
            <person name="Piazza S."/>
            <person name="Reed J."/>
            <person name="Reid J.F."/>
            <person name="Ring B.Z."/>
            <person name="Ringwald M."/>
            <person name="Rost B."/>
            <person name="Ruan Y."/>
            <person name="Salzberg S.L."/>
            <person name="Sandelin A."/>
            <person name="Schneider C."/>
            <person name="Schoenbach C."/>
            <person name="Sekiguchi K."/>
            <person name="Semple C.A."/>
            <person name="Seno S."/>
            <person name="Sessa L."/>
            <person name="Sheng Y."/>
            <person name="Shibata Y."/>
            <person name="Shimada H."/>
            <person name="Shimada K."/>
            <person name="Silva D."/>
            <person name="Sinclair B."/>
            <person name="Sperling S."/>
            <person name="Stupka E."/>
            <person name="Sugiura K."/>
            <person name="Sultana R."/>
            <person name="Takenaka Y."/>
            <person name="Taki K."/>
            <person name="Tammoja K."/>
            <person name="Tan S.L."/>
            <person name="Tang S."/>
            <person name="Taylor M.S."/>
            <person name="Tegner J."/>
            <person name="Teichmann S.A."/>
            <person name="Ueda H.R."/>
            <person name="van Nimwegen E."/>
            <person name="Verardo R."/>
            <person name="Wei C.L."/>
            <person name="Yagi K."/>
            <person name="Yamanishi H."/>
            <person name="Zabarovsky E."/>
            <person name="Zhu S."/>
            <person name="Zimmer A."/>
            <person name="Hide W."/>
            <person name="Bult C."/>
            <person name="Grimmond S.M."/>
            <person name="Teasdale R.D."/>
            <person name="Liu E.T."/>
            <person name="Brusic V."/>
            <person name="Quackenbush J."/>
            <person name="Wahlestedt C."/>
            <person name="Mattick J.S."/>
            <person name="Hume D.A."/>
            <person name="Kai C."/>
            <person name="Sasaki D."/>
            <person name="Tomaru Y."/>
            <person name="Fukuda S."/>
            <person name="Kanamori-Katayama M."/>
            <person name="Suzuki M."/>
            <person name="Aoki J."/>
            <person name="Arakawa T."/>
            <person name="Iida J."/>
            <person name="Imamura K."/>
            <person name="Itoh M."/>
            <person name="Kato T."/>
            <person name="Kawaji H."/>
            <person name="Kawagashira N."/>
            <person name="Kawashima T."/>
            <person name="Kojima M."/>
            <person name="Kondo S."/>
            <person name="Konno H."/>
            <person name="Nakano K."/>
            <person name="Ninomiya N."/>
            <person name="Nishio T."/>
            <person name="Okada M."/>
            <person name="Plessy C."/>
            <person name="Shibata K."/>
            <person name="Shiraki T."/>
            <person name="Suzuki S."/>
            <person name="Tagami M."/>
            <person name="Waki K."/>
            <person name="Watahiki A."/>
            <person name="Okamura-Oho Y."/>
            <person name="Suzuki H."/>
            <person name="Kawai J."/>
            <person name="Hayashizaki Y."/>
        </authorList>
    </citation>
    <scope>NUCLEOTIDE SEQUENCE [LARGE SCALE MRNA]</scope>
    <source>
        <strain>C57BL/6J</strain>
        <tissue>Embryo</tissue>
        <tissue>Spinal cord</tissue>
    </source>
</reference>
<reference key="2">
    <citation type="journal article" date="2004" name="Genome Res.">
        <title>The status, quality, and expansion of the NIH full-length cDNA project: the Mammalian Gene Collection (MGC).</title>
        <authorList>
            <consortium name="The MGC Project Team"/>
        </authorList>
    </citation>
    <scope>NUCLEOTIDE SEQUENCE [LARGE SCALE MRNA]</scope>
    <source>
        <strain>C57BL/6J</strain>
        <strain>FVB/N</strain>
        <tissue>Brain</tissue>
        <tissue>Colon</tissue>
    </source>
</reference>
<reference key="3">
    <citation type="journal article" date="2010" name="Cell">
        <title>A tissue-specific atlas of mouse protein phosphorylation and expression.</title>
        <authorList>
            <person name="Huttlin E.L."/>
            <person name="Jedrychowski M.P."/>
            <person name="Elias J.E."/>
            <person name="Goswami T."/>
            <person name="Rad R."/>
            <person name="Beausoleil S.A."/>
            <person name="Villen J."/>
            <person name="Haas W."/>
            <person name="Sowa M.E."/>
            <person name="Gygi S.P."/>
        </authorList>
    </citation>
    <scope>PHOSPHORYLATION [LARGE SCALE ANALYSIS] AT SER-435</scope>
    <scope>IDENTIFICATION BY MASS SPECTROMETRY [LARGE SCALE ANALYSIS]</scope>
    <source>
        <tissue>Kidney</tissue>
        <tissue>Lung</tissue>
        <tissue>Testis</tissue>
    </source>
</reference>
<reference key="4">
    <citation type="journal article" date="2010" name="EMBO J.">
        <title>Crosstalk between C/EBPbeta phosphorylation, arginine methylation, and SWI/SNF/Mediator implies an indexing transcription factor code.</title>
        <authorList>
            <person name="Kowenz-Leutz E."/>
            <person name="Pless O."/>
            <person name="Dittmar G."/>
            <person name="Knoblich M."/>
            <person name="Leutz A."/>
        </authorList>
    </citation>
    <scope>INTERACTION WITH CEBPB</scope>
</reference>
<protein>
    <recommendedName>
        <fullName>Mediator of RNA polymerase II transcription subunit 26</fullName>
    </recommendedName>
    <alternativeName>
        <fullName>Cofactor required for Sp1 transcriptional activation subunit 7</fullName>
        <shortName>CRSP complex subunit 7</shortName>
    </alternativeName>
    <alternativeName>
        <fullName>Mediator complex subunit 26</fullName>
    </alternativeName>
</protein>
<evidence type="ECO:0000250" key="1"/>
<evidence type="ECO:0000250" key="2">
    <source>
        <dbReference type="UniProtKB" id="O95402"/>
    </source>
</evidence>
<evidence type="ECO:0000255" key="3">
    <source>
        <dbReference type="PROSITE-ProRule" id="PRU00649"/>
    </source>
</evidence>
<evidence type="ECO:0000256" key="4">
    <source>
        <dbReference type="SAM" id="MobiDB-lite"/>
    </source>
</evidence>
<evidence type="ECO:0000269" key="5">
    <source>
    </source>
</evidence>
<evidence type="ECO:0000305" key="6"/>
<evidence type="ECO:0007744" key="7">
    <source>
    </source>
</evidence>